<protein>
    <recommendedName>
        <fullName evidence="1">UPF0311 protein CA_C3321</fullName>
    </recommendedName>
</protein>
<reference key="1">
    <citation type="journal article" date="2001" name="J. Bacteriol.">
        <title>Genome sequence and comparative analysis of the solvent-producing bacterium Clostridium acetobutylicum.</title>
        <authorList>
            <person name="Noelling J."/>
            <person name="Breton G."/>
            <person name="Omelchenko M.V."/>
            <person name="Makarova K.S."/>
            <person name="Zeng Q."/>
            <person name="Gibson R."/>
            <person name="Lee H.M."/>
            <person name="Dubois J."/>
            <person name="Qiu D."/>
            <person name="Hitti J."/>
            <person name="Wolf Y.I."/>
            <person name="Tatusov R.L."/>
            <person name="Sabathe F."/>
            <person name="Doucette-Stamm L.A."/>
            <person name="Soucaille P."/>
            <person name="Daly M.J."/>
            <person name="Bennett G.N."/>
            <person name="Koonin E.V."/>
            <person name="Smith D.R."/>
        </authorList>
    </citation>
    <scope>NUCLEOTIDE SEQUENCE [LARGE SCALE GENOMIC DNA]</scope>
    <source>
        <strain>ATCC 824 / DSM 792 / JCM 1419 / IAM 19013 / LMG 5710 / NBRC 13948 / NRRL B-527 / VKM B-1787 / 2291 / W</strain>
    </source>
</reference>
<accession>Q97DZ9</accession>
<keyword id="KW-0002">3D-structure</keyword>
<keyword id="KW-1185">Reference proteome</keyword>
<gene>
    <name type="ordered locus">CA_C3321</name>
</gene>
<dbReference type="EMBL" id="AE001437">
    <property type="protein sequence ID" value="AAK81253.1"/>
    <property type="molecule type" value="Genomic_DNA"/>
</dbReference>
<dbReference type="PIR" id="B97308">
    <property type="entry name" value="B97308"/>
</dbReference>
<dbReference type="RefSeq" id="NP_349913.1">
    <property type="nucleotide sequence ID" value="NC_003030.1"/>
</dbReference>
<dbReference type="RefSeq" id="WP_010966593.1">
    <property type="nucleotide sequence ID" value="NC_003030.1"/>
</dbReference>
<dbReference type="PDB" id="3G7G">
    <property type="method" value="X-ray"/>
    <property type="resolution" value="1.99 A"/>
    <property type="chains" value="A/B/C/D/E/F/G/H=1-158"/>
</dbReference>
<dbReference type="PDBsum" id="3G7G"/>
<dbReference type="SMR" id="Q97DZ9"/>
<dbReference type="STRING" id="272562.CA_C3321"/>
<dbReference type="KEGG" id="cac:CA_C3321"/>
<dbReference type="PATRIC" id="fig|272562.8.peg.3500"/>
<dbReference type="eggNOG" id="ENOG5032SS8">
    <property type="taxonomic scope" value="Bacteria"/>
</dbReference>
<dbReference type="HOGENOM" id="CLU_096872_4_3_9"/>
<dbReference type="OrthoDB" id="2003249at2"/>
<dbReference type="EvolutionaryTrace" id="Q97DZ9"/>
<dbReference type="Proteomes" id="UP000000814">
    <property type="component" value="Chromosome"/>
</dbReference>
<dbReference type="Gene3D" id="2.40.160.20">
    <property type="match status" value="1"/>
</dbReference>
<dbReference type="HAMAP" id="MF_00775">
    <property type="entry name" value="UPF0311"/>
    <property type="match status" value="1"/>
</dbReference>
<dbReference type="InterPro" id="IPR020915">
    <property type="entry name" value="UPF0311"/>
</dbReference>
<dbReference type="NCBIfam" id="NF002047">
    <property type="entry name" value="PRK00872.1-4"/>
    <property type="match status" value="1"/>
</dbReference>
<dbReference type="PANTHER" id="PTHR37315">
    <property type="entry name" value="UPF0311 PROTEIN BLR7842"/>
    <property type="match status" value="1"/>
</dbReference>
<dbReference type="PANTHER" id="PTHR37315:SF1">
    <property type="entry name" value="UPF0311 PROTEIN BLR7842"/>
    <property type="match status" value="1"/>
</dbReference>
<dbReference type="Pfam" id="PF11578">
    <property type="entry name" value="DUF3237"/>
    <property type="match status" value="1"/>
</dbReference>
<name>Y3321_CLOAB</name>
<evidence type="ECO:0000255" key="1">
    <source>
        <dbReference type="HAMAP-Rule" id="MF_00775"/>
    </source>
</evidence>
<evidence type="ECO:0007829" key="2">
    <source>
        <dbReference type="PDB" id="3G7G"/>
    </source>
</evidence>
<organism>
    <name type="scientific">Clostridium acetobutylicum (strain ATCC 824 / DSM 792 / JCM 1419 / IAM 19013 / LMG 5710 / NBRC 13948 / NRRL B-527 / VKM B-1787 / 2291 / W)</name>
    <dbReference type="NCBI Taxonomy" id="272562"/>
    <lineage>
        <taxon>Bacteria</taxon>
        <taxon>Bacillati</taxon>
        <taxon>Bacillota</taxon>
        <taxon>Clostridia</taxon>
        <taxon>Eubacteriales</taxon>
        <taxon>Clostridiaceae</taxon>
        <taxon>Clostridium</taxon>
    </lineage>
</organism>
<feature type="chain" id="PRO_0000108123" description="UPF0311 protein CA_C3321">
    <location>
        <begin position="1"/>
        <end position="158"/>
    </location>
</feature>
<feature type="strand" evidence="2">
    <location>
        <begin position="11"/>
        <end position="21"/>
    </location>
</feature>
<feature type="strand" evidence="2">
    <location>
        <begin position="25"/>
        <end position="30"/>
    </location>
</feature>
<feature type="turn" evidence="2">
    <location>
        <begin position="31"/>
        <end position="33"/>
    </location>
</feature>
<feature type="strand" evidence="2">
    <location>
        <begin position="34"/>
        <end position="48"/>
    </location>
</feature>
<feature type="strand" evidence="2">
    <location>
        <begin position="53"/>
        <end position="55"/>
    </location>
</feature>
<feature type="strand" evidence="2">
    <location>
        <begin position="60"/>
        <end position="65"/>
    </location>
</feature>
<feature type="strand" evidence="2">
    <location>
        <begin position="71"/>
        <end position="81"/>
    </location>
</feature>
<feature type="strand" evidence="2">
    <location>
        <begin position="86"/>
        <end position="96"/>
    </location>
</feature>
<feature type="helix" evidence="2">
    <location>
        <begin position="99"/>
        <end position="101"/>
    </location>
</feature>
<feature type="helix" evidence="2">
    <location>
        <begin position="102"/>
        <end position="107"/>
    </location>
</feature>
<feature type="helix" evidence="2">
    <location>
        <begin position="113"/>
        <end position="115"/>
    </location>
</feature>
<feature type="strand" evidence="2">
    <location>
        <begin position="117"/>
        <end position="128"/>
    </location>
</feature>
<feature type="helix" evidence="2">
    <location>
        <begin position="129"/>
        <end position="135"/>
    </location>
</feature>
<feature type="strand" evidence="2">
    <location>
        <begin position="139"/>
        <end position="144"/>
    </location>
</feature>
<feature type="strand" evidence="2">
    <location>
        <begin position="150"/>
        <end position="157"/>
    </location>
</feature>
<comment type="similarity">
    <text evidence="1">Belongs to the UPF0311 family.</text>
</comment>
<sequence length="158" mass="17923">MDITNIKEMNYEEVFSITITVDKPILIGQDDIVGRRQLIPIISGKVSGNNFNGKVLPGGIDSQIVRPDGKCELSARYAIRLDDGAAIYIENNGIRTVPDEYIEAVKSGEFVDPNAYYFRTIPTFETYSPKYKWMMNHIFVCCASRLPENVLLKFYKIS</sequence>
<proteinExistence type="evidence at protein level"/>